<comment type="catalytic activity">
    <reaction evidence="1">
        <text>beta-D-fructose 1,6-bisphosphate + H2O = beta-D-fructose 6-phosphate + phosphate</text>
        <dbReference type="Rhea" id="RHEA:11064"/>
        <dbReference type="ChEBI" id="CHEBI:15377"/>
        <dbReference type="ChEBI" id="CHEBI:32966"/>
        <dbReference type="ChEBI" id="CHEBI:43474"/>
        <dbReference type="ChEBI" id="CHEBI:57634"/>
        <dbReference type="EC" id="3.1.3.11"/>
    </reaction>
</comment>
<comment type="cofactor">
    <cofactor evidence="1">
        <name>Mg(2+)</name>
        <dbReference type="ChEBI" id="CHEBI:18420"/>
    </cofactor>
    <text evidence="1">Binds 2 magnesium ions per subunit.</text>
</comment>
<comment type="pathway">
    <text evidence="1">Carbohydrate biosynthesis; Calvin cycle.</text>
</comment>
<comment type="subunit">
    <text evidence="1">Homotetramer.</text>
</comment>
<comment type="subcellular location">
    <subcellularLocation>
        <location evidence="1">Cytoplasm</location>
    </subcellularLocation>
</comment>
<comment type="similarity">
    <text evidence="1">Belongs to the FBPase class 1 family.</text>
</comment>
<keyword id="KW-0113">Calvin cycle</keyword>
<keyword id="KW-0119">Carbohydrate metabolism</keyword>
<keyword id="KW-0963">Cytoplasm</keyword>
<keyword id="KW-0378">Hydrolase</keyword>
<keyword id="KW-0460">Magnesium</keyword>
<keyword id="KW-0479">Metal-binding</keyword>
<keyword id="KW-1185">Reference proteome</keyword>
<sequence length="333" mass="36864">MSNLITIERHILEQQKFFPDAQGELTDLLNDVAFAAKLVRREVVRAGLVDILGFTGSTNVQGEEVKKLDLFANEKIISAIGQHGRFAIMGSEENEGVIIPPKNESGNYALLFDPLDGSSNIDVNVSVGTIFSIYKLKGDDPGKASLSDCLQHGYEQVAAGYVIYGSSVVMVYTTGHGVHGFTYDPTIGEFLLSHENIITPKSGKYYSINEGSYAQFNEGTKRYLDYIKEEDPATNRPYSTRYIGSLVADFHRNLLTGGVFVYPPTTKHLKGKLRLMYEANPLAFICEQAGGRATNGRDRILDIQPLELHQRTPLYIGSVDDVILAEEFEQGIR</sequence>
<organism>
    <name type="scientific">Pelodictyon phaeoclathratiforme (strain DSM 5477 / BU-1)</name>
    <dbReference type="NCBI Taxonomy" id="324925"/>
    <lineage>
        <taxon>Bacteria</taxon>
        <taxon>Pseudomonadati</taxon>
        <taxon>Chlorobiota</taxon>
        <taxon>Chlorobiia</taxon>
        <taxon>Chlorobiales</taxon>
        <taxon>Chlorobiaceae</taxon>
        <taxon>Chlorobium/Pelodictyon group</taxon>
        <taxon>Pelodictyon</taxon>
    </lineage>
</organism>
<accession>B4SDN7</accession>
<protein>
    <recommendedName>
        <fullName evidence="1">Fructose-1,6-bisphosphatase class 1</fullName>
        <shortName evidence="1">FBPase class 1</shortName>
        <ecNumber evidence="1">3.1.3.11</ecNumber>
    </recommendedName>
    <alternativeName>
        <fullName evidence="1">D-fructose-1,6-bisphosphate 1-phosphohydrolase class 1</fullName>
    </alternativeName>
</protein>
<gene>
    <name evidence="1" type="primary">fbp</name>
    <name type="ordered locus">Ppha_2207</name>
</gene>
<evidence type="ECO:0000255" key="1">
    <source>
        <dbReference type="HAMAP-Rule" id="MF_01855"/>
    </source>
</evidence>
<proteinExistence type="inferred from homology"/>
<dbReference type="EC" id="3.1.3.11" evidence="1"/>
<dbReference type="EMBL" id="CP001110">
    <property type="protein sequence ID" value="ACF44405.1"/>
    <property type="molecule type" value="Genomic_DNA"/>
</dbReference>
<dbReference type="RefSeq" id="WP_012508881.1">
    <property type="nucleotide sequence ID" value="NC_011060.1"/>
</dbReference>
<dbReference type="SMR" id="B4SDN7"/>
<dbReference type="STRING" id="324925.Ppha_2207"/>
<dbReference type="KEGG" id="pph:Ppha_2207"/>
<dbReference type="eggNOG" id="COG0158">
    <property type="taxonomic scope" value="Bacteria"/>
</dbReference>
<dbReference type="HOGENOM" id="CLU_039977_2_2_10"/>
<dbReference type="OrthoDB" id="9806756at2"/>
<dbReference type="UniPathway" id="UPA00116"/>
<dbReference type="Proteomes" id="UP000002724">
    <property type="component" value="Chromosome"/>
</dbReference>
<dbReference type="GO" id="GO:0005829">
    <property type="term" value="C:cytosol"/>
    <property type="evidence" value="ECO:0007669"/>
    <property type="project" value="TreeGrafter"/>
</dbReference>
<dbReference type="GO" id="GO:0042132">
    <property type="term" value="F:fructose 1,6-bisphosphate 1-phosphatase activity"/>
    <property type="evidence" value="ECO:0007669"/>
    <property type="project" value="UniProtKB-UniRule"/>
</dbReference>
<dbReference type="GO" id="GO:0000287">
    <property type="term" value="F:magnesium ion binding"/>
    <property type="evidence" value="ECO:0007669"/>
    <property type="project" value="UniProtKB-UniRule"/>
</dbReference>
<dbReference type="GO" id="GO:0030388">
    <property type="term" value="P:fructose 1,6-bisphosphate metabolic process"/>
    <property type="evidence" value="ECO:0007669"/>
    <property type="project" value="TreeGrafter"/>
</dbReference>
<dbReference type="GO" id="GO:0006002">
    <property type="term" value="P:fructose 6-phosphate metabolic process"/>
    <property type="evidence" value="ECO:0007669"/>
    <property type="project" value="TreeGrafter"/>
</dbReference>
<dbReference type="GO" id="GO:0006000">
    <property type="term" value="P:fructose metabolic process"/>
    <property type="evidence" value="ECO:0007669"/>
    <property type="project" value="TreeGrafter"/>
</dbReference>
<dbReference type="GO" id="GO:0006094">
    <property type="term" value="P:gluconeogenesis"/>
    <property type="evidence" value="ECO:0007669"/>
    <property type="project" value="UniProtKB-UniRule"/>
</dbReference>
<dbReference type="GO" id="GO:0019253">
    <property type="term" value="P:reductive pentose-phosphate cycle"/>
    <property type="evidence" value="ECO:0007669"/>
    <property type="project" value="UniProtKB-UniRule"/>
</dbReference>
<dbReference type="GO" id="GO:0005986">
    <property type="term" value="P:sucrose biosynthetic process"/>
    <property type="evidence" value="ECO:0007669"/>
    <property type="project" value="TreeGrafter"/>
</dbReference>
<dbReference type="CDD" id="cd00354">
    <property type="entry name" value="FBPase"/>
    <property type="match status" value="1"/>
</dbReference>
<dbReference type="FunFam" id="3.30.540.10:FF:000002">
    <property type="entry name" value="Fructose-1,6-bisphosphatase class 1"/>
    <property type="match status" value="1"/>
</dbReference>
<dbReference type="FunFam" id="3.40.190.80:FF:000001">
    <property type="entry name" value="Fructose-1,6-bisphosphatase class 1"/>
    <property type="match status" value="1"/>
</dbReference>
<dbReference type="Gene3D" id="3.40.190.80">
    <property type="match status" value="1"/>
</dbReference>
<dbReference type="Gene3D" id="3.30.540.10">
    <property type="entry name" value="Fructose-1,6-Bisphosphatase, subunit A, domain 1"/>
    <property type="match status" value="1"/>
</dbReference>
<dbReference type="HAMAP" id="MF_01855">
    <property type="entry name" value="FBPase_class1"/>
    <property type="match status" value="1"/>
</dbReference>
<dbReference type="InterPro" id="IPR044015">
    <property type="entry name" value="FBPase_C_dom"/>
</dbReference>
<dbReference type="InterPro" id="IPR000146">
    <property type="entry name" value="FBPase_class-1"/>
</dbReference>
<dbReference type="InterPro" id="IPR033391">
    <property type="entry name" value="FBPase_N"/>
</dbReference>
<dbReference type="InterPro" id="IPR028343">
    <property type="entry name" value="FBPtase"/>
</dbReference>
<dbReference type="NCBIfam" id="NF006778">
    <property type="entry name" value="PRK09293.1-1"/>
    <property type="match status" value="1"/>
</dbReference>
<dbReference type="PANTHER" id="PTHR11556">
    <property type="entry name" value="FRUCTOSE-1,6-BISPHOSPHATASE-RELATED"/>
    <property type="match status" value="1"/>
</dbReference>
<dbReference type="PANTHER" id="PTHR11556:SF35">
    <property type="entry name" value="SEDOHEPTULOSE-1,7-BISPHOSPHATASE, CHLOROPLASTIC"/>
    <property type="match status" value="1"/>
</dbReference>
<dbReference type="Pfam" id="PF00316">
    <property type="entry name" value="FBPase"/>
    <property type="match status" value="1"/>
</dbReference>
<dbReference type="Pfam" id="PF18913">
    <property type="entry name" value="FBPase_C"/>
    <property type="match status" value="1"/>
</dbReference>
<dbReference type="PIRSF" id="PIRSF500210">
    <property type="entry name" value="FBPtase"/>
    <property type="match status" value="1"/>
</dbReference>
<dbReference type="PIRSF" id="PIRSF000904">
    <property type="entry name" value="FBPtase_SBPase"/>
    <property type="match status" value="1"/>
</dbReference>
<dbReference type="PRINTS" id="PR00115">
    <property type="entry name" value="F16BPHPHTASE"/>
</dbReference>
<dbReference type="SUPFAM" id="SSF56655">
    <property type="entry name" value="Carbohydrate phosphatase"/>
    <property type="match status" value="1"/>
</dbReference>
<name>F16PA_PELPB</name>
<reference key="1">
    <citation type="submission" date="2008-06" db="EMBL/GenBank/DDBJ databases">
        <title>Complete sequence of Pelodictyon phaeoclathratiforme BU-1.</title>
        <authorList>
            <consortium name="US DOE Joint Genome Institute"/>
            <person name="Lucas S."/>
            <person name="Copeland A."/>
            <person name="Lapidus A."/>
            <person name="Glavina del Rio T."/>
            <person name="Dalin E."/>
            <person name="Tice H."/>
            <person name="Bruce D."/>
            <person name="Goodwin L."/>
            <person name="Pitluck S."/>
            <person name="Schmutz J."/>
            <person name="Larimer F."/>
            <person name="Land M."/>
            <person name="Hauser L."/>
            <person name="Kyrpides N."/>
            <person name="Mikhailova N."/>
            <person name="Liu Z."/>
            <person name="Li T."/>
            <person name="Zhao F."/>
            <person name="Overmann J."/>
            <person name="Bryant D.A."/>
            <person name="Richardson P."/>
        </authorList>
    </citation>
    <scope>NUCLEOTIDE SEQUENCE [LARGE SCALE GENOMIC DNA]</scope>
    <source>
        <strain>DSM 5477 / BU-1</strain>
    </source>
</reference>
<feature type="chain" id="PRO_0000364625" description="Fructose-1,6-bisphosphatase class 1">
    <location>
        <begin position="1"/>
        <end position="333"/>
    </location>
</feature>
<feature type="binding site" evidence="1">
    <location>
        <position position="92"/>
    </location>
    <ligand>
        <name>Mg(2+)</name>
        <dbReference type="ChEBI" id="CHEBI:18420"/>
        <label>1</label>
    </ligand>
</feature>
<feature type="binding site" evidence="1">
    <location>
        <position position="113"/>
    </location>
    <ligand>
        <name>Mg(2+)</name>
        <dbReference type="ChEBI" id="CHEBI:18420"/>
        <label>1</label>
    </ligand>
</feature>
<feature type="binding site" evidence="1">
    <location>
        <position position="113"/>
    </location>
    <ligand>
        <name>Mg(2+)</name>
        <dbReference type="ChEBI" id="CHEBI:18420"/>
        <label>2</label>
    </ligand>
</feature>
<feature type="binding site" evidence="1">
    <location>
        <position position="115"/>
    </location>
    <ligand>
        <name>Mg(2+)</name>
        <dbReference type="ChEBI" id="CHEBI:18420"/>
        <label>1</label>
    </ligand>
</feature>
<feature type="binding site" evidence="1">
    <location>
        <begin position="116"/>
        <end position="119"/>
    </location>
    <ligand>
        <name>substrate</name>
    </ligand>
</feature>
<feature type="binding site" evidence="1">
    <location>
        <position position="116"/>
    </location>
    <ligand>
        <name>Mg(2+)</name>
        <dbReference type="ChEBI" id="CHEBI:18420"/>
        <label>2</label>
    </ligand>
</feature>
<feature type="binding site" evidence="1">
    <location>
        <position position="209"/>
    </location>
    <ligand>
        <name>substrate</name>
    </ligand>
</feature>
<feature type="binding site" evidence="1">
    <location>
        <position position="242"/>
    </location>
    <ligand>
        <name>substrate</name>
    </ligand>
</feature>
<feature type="binding site" evidence="1">
    <location>
        <position position="272"/>
    </location>
    <ligand>
        <name>substrate</name>
    </ligand>
</feature>
<feature type="binding site" evidence="1">
    <location>
        <position position="278"/>
    </location>
    <ligand>
        <name>Mg(2+)</name>
        <dbReference type="ChEBI" id="CHEBI:18420"/>
        <label>2</label>
    </ligand>
</feature>